<organism>
    <name type="scientific">Saccharophagus degradans (strain 2-40 / ATCC 43961 / DSM 17024)</name>
    <dbReference type="NCBI Taxonomy" id="203122"/>
    <lineage>
        <taxon>Bacteria</taxon>
        <taxon>Pseudomonadati</taxon>
        <taxon>Pseudomonadota</taxon>
        <taxon>Gammaproteobacteria</taxon>
        <taxon>Cellvibrionales</taxon>
        <taxon>Cellvibrionaceae</taxon>
        <taxon>Saccharophagus</taxon>
    </lineage>
</organism>
<proteinExistence type="inferred from homology"/>
<sequence>MLDEYKLTHLKQLEAESIHIIREVAAEFDNPVMLYSIGKDSAVMLHLAMKAFAPGKPPFPLMHVDTTWKFKEMIEFRDKYVKELGLELIVHSNQEGIDMGISPFVHGSAKHTDIMKTQALKQALDKHGFDAAFGGARRDEEKSRAKERVYSFRDKKHRWDPKNQRPELWNIYNSRVDKGESIRVFPLSNWTELDIWQYIHLESIPLVPLYFAAKRPVVERDGTLIMVDDDRMPIEPGEKVEEKMVRFRTLGCYPLTGAVESEATTLPEIIQEMLLTTTSERQGRVIDHDSSGSMEKKKQEGYF</sequence>
<comment type="function">
    <text evidence="1">With CysN forms the ATP sulfurylase (ATPS) that catalyzes the adenylation of sulfate producing adenosine 5'-phosphosulfate (APS) and diphosphate, the first enzymatic step in sulfur assimilation pathway. APS synthesis involves the formation of a high-energy phosphoric-sulfuric acid anhydride bond driven by GTP hydrolysis by CysN coupled to ATP hydrolysis by CysD.</text>
</comment>
<comment type="catalytic activity">
    <reaction evidence="1">
        <text>sulfate + ATP + H(+) = adenosine 5'-phosphosulfate + diphosphate</text>
        <dbReference type="Rhea" id="RHEA:18133"/>
        <dbReference type="ChEBI" id="CHEBI:15378"/>
        <dbReference type="ChEBI" id="CHEBI:16189"/>
        <dbReference type="ChEBI" id="CHEBI:30616"/>
        <dbReference type="ChEBI" id="CHEBI:33019"/>
        <dbReference type="ChEBI" id="CHEBI:58243"/>
        <dbReference type="EC" id="2.7.7.4"/>
    </reaction>
</comment>
<comment type="pathway">
    <text evidence="1">Sulfur metabolism; hydrogen sulfide biosynthesis; sulfite from sulfate: step 1/3.</text>
</comment>
<comment type="subunit">
    <text evidence="1">Heterodimer composed of CysD, the smaller subunit, and CysN.</text>
</comment>
<comment type="similarity">
    <text evidence="1">Belongs to the PAPS reductase family. CysD subfamily.</text>
</comment>
<gene>
    <name evidence="1" type="primary">cysD</name>
    <name type="ordered locus">Sde_2145</name>
</gene>
<protein>
    <recommendedName>
        <fullName evidence="1">Sulfate adenylyltransferase subunit 2</fullName>
        <ecNumber evidence="1">2.7.7.4</ecNumber>
    </recommendedName>
    <alternativeName>
        <fullName evidence="1">ATP-sulfurylase small subunit</fullName>
    </alternativeName>
    <alternativeName>
        <fullName evidence="1">Sulfate adenylate transferase</fullName>
        <shortName evidence="1">SAT</shortName>
    </alternativeName>
</protein>
<reference key="1">
    <citation type="journal article" date="2008" name="PLoS Genet.">
        <title>Complete genome sequence of the complex carbohydrate-degrading marine bacterium, Saccharophagus degradans strain 2-40 T.</title>
        <authorList>
            <person name="Weiner R.M."/>
            <person name="Taylor L.E. II"/>
            <person name="Henrissat B."/>
            <person name="Hauser L."/>
            <person name="Land M."/>
            <person name="Coutinho P.M."/>
            <person name="Rancurel C."/>
            <person name="Saunders E.H."/>
            <person name="Longmire A.G."/>
            <person name="Zhang H."/>
            <person name="Bayer E.A."/>
            <person name="Gilbert H.J."/>
            <person name="Larimer F."/>
            <person name="Zhulin I.B."/>
            <person name="Ekborg N.A."/>
            <person name="Lamed R."/>
            <person name="Richardson P.M."/>
            <person name="Borovok I."/>
            <person name="Hutcheson S."/>
        </authorList>
    </citation>
    <scope>NUCLEOTIDE SEQUENCE [LARGE SCALE GENOMIC DNA]</scope>
    <source>
        <strain>2-40 / ATCC 43961 / DSM 17024</strain>
    </source>
</reference>
<keyword id="KW-0067">ATP-binding</keyword>
<keyword id="KW-0547">Nucleotide-binding</keyword>
<keyword id="KW-0548">Nucleotidyltransferase</keyword>
<keyword id="KW-1185">Reference proteome</keyword>
<keyword id="KW-0808">Transferase</keyword>
<dbReference type="EC" id="2.7.7.4" evidence="1"/>
<dbReference type="EMBL" id="CP000282">
    <property type="protein sequence ID" value="ABD81405.1"/>
    <property type="molecule type" value="Genomic_DNA"/>
</dbReference>
<dbReference type="RefSeq" id="WP_011468623.1">
    <property type="nucleotide sequence ID" value="NC_007912.1"/>
</dbReference>
<dbReference type="SMR" id="Q21IS4"/>
<dbReference type="STRING" id="203122.Sde_2145"/>
<dbReference type="GeneID" id="98613816"/>
<dbReference type="KEGG" id="sde:Sde_2145"/>
<dbReference type="eggNOG" id="COG0175">
    <property type="taxonomic scope" value="Bacteria"/>
</dbReference>
<dbReference type="HOGENOM" id="CLU_043026_0_0_6"/>
<dbReference type="OrthoDB" id="9772604at2"/>
<dbReference type="UniPathway" id="UPA00140">
    <property type="reaction ID" value="UER00204"/>
</dbReference>
<dbReference type="Proteomes" id="UP000001947">
    <property type="component" value="Chromosome"/>
</dbReference>
<dbReference type="GO" id="GO:0005524">
    <property type="term" value="F:ATP binding"/>
    <property type="evidence" value="ECO:0007669"/>
    <property type="project" value="UniProtKB-KW"/>
</dbReference>
<dbReference type="GO" id="GO:0004781">
    <property type="term" value="F:sulfate adenylyltransferase (ATP) activity"/>
    <property type="evidence" value="ECO:0007669"/>
    <property type="project" value="UniProtKB-UniRule"/>
</dbReference>
<dbReference type="GO" id="GO:0070814">
    <property type="term" value="P:hydrogen sulfide biosynthetic process"/>
    <property type="evidence" value="ECO:0007669"/>
    <property type="project" value="UniProtKB-UniRule"/>
</dbReference>
<dbReference type="GO" id="GO:0000103">
    <property type="term" value="P:sulfate assimilation"/>
    <property type="evidence" value="ECO:0007669"/>
    <property type="project" value="UniProtKB-UniRule"/>
</dbReference>
<dbReference type="CDD" id="cd23946">
    <property type="entry name" value="Sulfate_adenylyltransferase_2"/>
    <property type="match status" value="1"/>
</dbReference>
<dbReference type="FunFam" id="3.40.50.620:FF:000002">
    <property type="entry name" value="Sulfate adenylyltransferase subunit 2"/>
    <property type="match status" value="1"/>
</dbReference>
<dbReference type="Gene3D" id="3.40.50.620">
    <property type="entry name" value="HUPs"/>
    <property type="match status" value="1"/>
</dbReference>
<dbReference type="HAMAP" id="MF_00064">
    <property type="entry name" value="Sulf_adenylyltr_sub2"/>
    <property type="match status" value="1"/>
</dbReference>
<dbReference type="InterPro" id="IPR002500">
    <property type="entry name" value="PAPS_reduct_dom"/>
</dbReference>
<dbReference type="InterPro" id="IPR014729">
    <property type="entry name" value="Rossmann-like_a/b/a_fold"/>
</dbReference>
<dbReference type="InterPro" id="IPR011784">
    <property type="entry name" value="SO4_adenylTrfase_ssu"/>
</dbReference>
<dbReference type="InterPro" id="IPR050128">
    <property type="entry name" value="Sulfate_adenylyltrnsfr_sub2"/>
</dbReference>
<dbReference type="NCBIfam" id="TIGR02039">
    <property type="entry name" value="CysD"/>
    <property type="match status" value="1"/>
</dbReference>
<dbReference type="NCBIfam" id="NF003587">
    <property type="entry name" value="PRK05253.1"/>
    <property type="match status" value="1"/>
</dbReference>
<dbReference type="NCBIfam" id="NF009214">
    <property type="entry name" value="PRK12563.1"/>
    <property type="match status" value="1"/>
</dbReference>
<dbReference type="PANTHER" id="PTHR43196">
    <property type="entry name" value="SULFATE ADENYLYLTRANSFERASE SUBUNIT 2"/>
    <property type="match status" value="1"/>
</dbReference>
<dbReference type="PANTHER" id="PTHR43196:SF1">
    <property type="entry name" value="SULFATE ADENYLYLTRANSFERASE SUBUNIT 2"/>
    <property type="match status" value="1"/>
</dbReference>
<dbReference type="Pfam" id="PF01507">
    <property type="entry name" value="PAPS_reduct"/>
    <property type="match status" value="1"/>
</dbReference>
<dbReference type="PIRSF" id="PIRSF002936">
    <property type="entry name" value="CysDAde_trans"/>
    <property type="match status" value="1"/>
</dbReference>
<dbReference type="SUPFAM" id="SSF52402">
    <property type="entry name" value="Adenine nucleotide alpha hydrolases-like"/>
    <property type="match status" value="1"/>
</dbReference>
<name>CYSD_SACD2</name>
<evidence type="ECO:0000255" key="1">
    <source>
        <dbReference type="HAMAP-Rule" id="MF_00064"/>
    </source>
</evidence>
<evidence type="ECO:0000256" key="2">
    <source>
        <dbReference type="SAM" id="MobiDB-lite"/>
    </source>
</evidence>
<feature type="chain" id="PRO_0000340219" description="Sulfate adenylyltransferase subunit 2">
    <location>
        <begin position="1"/>
        <end position="303"/>
    </location>
</feature>
<feature type="region of interest" description="Disordered" evidence="2">
    <location>
        <begin position="281"/>
        <end position="303"/>
    </location>
</feature>
<accession>Q21IS4</accession>